<accession>A4IVY3</accession>
<comment type="function">
    <text evidence="1">Allows the formation of correctly charged Gln-tRNA(Gln) through the transamidation of misacylated Glu-tRNA(Gln) in organisms which lack glutaminyl-tRNA synthetase. The reaction takes place in the presence of glutamine and ATP through an activated gamma-phospho-Glu-tRNA(Gln).</text>
</comment>
<comment type="catalytic activity">
    <reaction evidence="1">
        <text>L-glutamyl-tRNA(Gln) + L-glutamine + ATP + H2O = L-glutaminyl-tRNA(Gln) + L-glutamate + ADP + phosphate + H(+)</text>
        <dbReference type="Rhea" id="RHEA:17521"/>
        <dbReference type="Rhea" id="RHEA-COMP:9681"/>
        <dbReference type="Rhea" id="RHEA-COMP:9684"/>
        <dbReference type="ChEBI" id="CHEBI:15377"/>
        <dbReference type="ChEBI" id="CHEBI:15378"/>
        <dbReference type="ChEBI" id="CHEBI:29985"/>
        <dbReference type="ChEBI" id="CHEBI:30616"/>
        <dbReference type="ChEBI" id="CHEBI:43474"/>
        <dbReference type="ChEBI" id="CHEBI:58359"/>
        <dbReference type="ChEBI" id="CHEBI:78520"/>
        <dbReference type="ChEBI" id="CHEBI:78521"/>
        <dbReference type="ChEBI" id="CHEBI:456216"/>
        <dbReference type="EC" id="6.3.5.7"/>
    </reaction>
</comment>
<comment type="subunit">
    <text evidence="1">Heterotrimer of A, B and C subunits.</text>
</comment>
<comment type="similarity">
    <text evidence="1">Belongs to the amidase family. GatA subfamily.</text>
</comment>
<feature type="chain" id="PRO_1000015834" description="Glutamyl-tRNA(Gln) amidotransferase subunit A">
    <location>
        <begin position="1"/>
        <end position="481"/>
    </location>
</feature>
<feature type="active site" description="Charge relay system" evidence="1">
    <location>
        <position position="74"/>
    </location>
</feature>
<feature type="active site" description="Charge relay system" evidence="1">
    <location>
        <position position="149"/>
    </location>
</feature>
<feature type="active site" description="Acyl-ester intermediate" evidence="1">
    <location>
        <position position="173"/>
    </location>
</feature>
<proteinExistence type="inferred from homology"/>
<reference key="1">
    <citation type="journal article" date="2007" name="PLoS ONE">
        <title>Complete genomic characterization of a pathogenic A.II strain of Francisella tularensis subspecies tularensis.</title>
        <authorList>
            <person name="Beckstrom-Sternberg S.M."/>
            <person name="Auerbach R.K."/>
            <person name="Godbole S."/>
            <person name="Pearson J.V."/>
            <person name="Beckstrom-Sternberg J.S."/>
            <person name="Deng Z."/>
            <person name="Munk C."/>
            <person name="Kubota K."/>
            <person name="Zhou Y."/>
            <person name="Bruce D."/>
            <person name="Noronha J."/>
            <person name="Scheuermann R.H."/>
            <person name="Wang A."/>
            <person name="Wei X."/>
            <person name="Wang J."/>
            <person name="Hao J."/>
            <person name="Wagner D.M."/>
            <person name="Brettin T.S."/>
            <person name="Brown N."/>
            <person name="Gilna P."/>
            <person name="Keim P.S."/>
        </authorList>
    </citation>
    <scope>NUCLEOTIDE SEQUENCE [LARGE SCALE GENOMIC DNA]</scope>
    <source>
        <strain>WY96-3418</strain>
    </source>
</reference>
<protein>
    <recommendedName>
        <fullName evidence="1">Glutamyl-tRNA(Gln) amidotransferase subunit A</fullName>
        <shortName evidence="1">Glu-ADT subunit A</shortName>
        <ecNumber evidence="1">6.3.5.7</ecNumber>
    </recommendedName>
</protein>
<dbReference type="EC" id="6.3.5.7" evidence="1"/>
<dbReference type="EMBL" id="CP000608">
    <property type="protein sequence ID" value="ABO46085.1"/>
    <property type="molecule type" value="Genomic_DNA"/>
</dbReference>
<dbReference type="RefSeq" id="WP_003024537.1">
    <property type="nucleotide sequence ID" value="NC_009257.1"/>
</dbReference>
<dbReference type="SMR" id="A4IVY3"/>
<dbReference type="KEGG" id="ftw:FTW_0094"/>
<dbReference type="HOGENOM" id="CLU_009600_0_3_6"/>
<dbReference type="GO" id="GO:0030956">
    <property type="term" value="C:glutamyl-tRNA(Gln) amidotransferase complex"/>
    <property type="evidence" value="ECO:0007669"/>
    <property type="project" value="InterPro"/>
</dbReference>
<dbReference type="GO" id="GO:0005524">
    <property type="term" value="F:ATP binding"/>
    <property type="evidence" value="ECO:0007669"/>
    <property type="project" value="UniProtKB-KW"/>
</dbReference>
<dbReference type="GO" id="GO:0050567">
    <property type="term" value="F:glutaminyl-tRNA synthase (glutamine-hydrolyzing) activity"/>
    <property type="evidence" value="ECO:0007669"/>
    <property type="project" value="UniProtKB-UniRule"/>
</dbReference>
<dbReference type="GO" id="GO:0006412">
    <property type="term" value="P:translation"/>
    <property type="evidence" value="ECO:0007669"/>
    <property type="project" value="UniProtKB-UniRule"/>
</dbReference>
<dbReference type="Gene3D" id="3.90.1300.10">
    <property type="entry name" value="Amidase signature (AS) domain"/>
    <property type="match status" value="1"/>
</dbReference>
<dbReference type="HAMAP" id="MF_00120">
    <property type="entry name" value="GatA"/>
    <property type="match status" value="1"/>
</dbReference>
<dbReference type="InterPro" id="IPR000120">
    <property type="entry name" value="Amidase"/>
</dbReference>
<dbReference type="InterPro" id="IPR020556">
    <property type="entry name" value="Amidase_CS"/>
</dbReference>
<dbReference type="InterPro" id="IPR023631">
    <property type="entry name" value="Amidase_dom"/>
</dbReference>
<dbReference type="InterPro" id="IPR036928">
    <property type="entry name" value="AS_sf"/>
</dbReference>
<dbReference type="InterPro" id="IPR004412">
    <property type="entry name" value="GatA"/>
</dbReference>
<dbReference type="NCBIfam" id="TIGR00132">
    <property type="entry name" value="gatA"/>
    <property type="match status" value="1"/>
</dbReference>
<dbReference type="PANTHER" id="PTHR11895:SF151">
    <property type="entry name" value="GLUTAMYL-TRNA(GLN) AMIDOTRANSFERASE SUBUNIT A"/>
    <property type="match status" value="1"/>
</dbReference>
<dbReference type="PANTHER" id="PTHR11895">
    <property type="entry name" value="TRANSAMIDASE"/>
    <property type="match status" value="1"/>
</dbReference>
<dbReference type="Pfam" id="PF01425">
    <property type="entry name" value="Amidase"/>
    <property type="match status" value="1"/>
</dbReference>
<dbReference type="SUPFAM" id="SSF75304">
    <property type="entry name" value="Amidase signature (AS) enzymes"/>
    <property type="match status" value="1"/>
</dbReference>
<dbReference type="PROSITE" id="PS00571">
    <property type="entry name" value="AMIDASES"/>
    <property type="match status" value="1"/>
</dbReference>
<organism>
    <name type="scientific">Francisella tularensis subsp. tularensis (strain WY96-3418)</name>
    <dbReference type="NCBI Taxonomy" id="418136"/>
    <lineage>
        <taxon>Bacteria</taxon>
        <taxon>Pseudomonadati</taxon>
        <taxon>Pseudomonadota</taxon>
        <taxon>Gammaproteobacteria</taxon>
        <taxon>Thiotrichales</taxon>
        <taxon>Francisellaceae</taxon>
        <taxon>Francisella</taxon>
    </lineage>
</organism>
<sequence>MSYIKKLRARLDSGEISAVELTKEYLAKIKEQDKRINSVITLCEAEALKEAEDADAIISAGKQGLLTGIPILHKDLFCTKGIRTTAASKMLDNFVAPYDSTVTKNCKDQGMVTLGKLNMDEFAMGSTNEYSYYGAVSNPWDLERVPGGSSGGSAAAVAAGFAPISTGSDTGGSVRQPASFCGLTAMKPSYGSTSRFGMVAFASSFDQAGIFGHYAEDVAIMLDAIAGECEFDSTCVGVKQNHFTQDLEKDISGKVIGVDESLIKDLPAQIQEAVSKTLDNFKKLGAEIKSVKVPDLKEALSTYYIITPAEAAANLARYDGIRYGYRNPEARDLDELYRKSRTDGFGAEVKRRIMIGNYVLASSQYDSYYNKAQQLRKVMTDQINQIFTQVDAIFMPASPSEAFKKGDKLDPVSAYLSDIYTIPANISGLPAIAFPIGFANNLPVGGQLMAKAFNDNILTQMVVQYQKHYGIEEFILQQARI</sequence>
<evidence type="ECO:0000255" key="1">
    <source>
        <dbReference type="HAMAP-Rule" id="MF_00120"/>
    </source>
</evidence>
<gene>
    <name evidence="1" type="primary">gatA</name>
    <name type="ordered locus">FTW_0094</name>
</gene>
<name>GATA_FRATW</name>
<keyword id="KW-0067">ATP-binding</keyword>
<keyword id="KW-0436">Ligase</keyword>
<keyword id="KW-0547">Nucleotide-binding</keyword>
<keyword id="KW-0648">Protein biosynthesis</keyword>